<organism>
    <name type="scientific">Cronobacter sakazakii (strain ATCC BAA-894)</name>
    <name type="common">Enterobacter sakazakii</name>
    <dbReference type="NCBI Taxonomy" id="290339"/>
    <lineage>
        <taxon>Bacteria</taxon>
        <taxon>Pseudomonadati</taxon>
        <taxon>Pseudomonadota</taxon>
        <taxon>Gammaproteobacteria</taxon>
        <taxon>Enterobacterales</taxon>
        <taxon>Enterobacteriaceae</taxon>
        <taxon>Cronobacter</taxon>
    </lineage>
</organism>
<keyword id="KW-0010">Activator</keyword>
<keyword id="KW-0963">Cytoplasm</keyword>
<keyword id="KW-0238">DNA-binding</keyword>
<keyword id="KW-1185">Reference proteome</keyword>
<keyword id="KW-0677">Repeat</keyword>
<keyword id="KW-0684">Rhamnose metabolism</keyword>
<keyword id="KW-0804">Transcription</keyword>
<keyword id="KW-0805">Transcription regulation</keyword>
<reference key="1">
    <citation type="journal article" date="2010" name="PLoS ONE">
        <title>Genome sequence of Cronobacter sakazakii BAA-894 and comparative genomic hybridization analysis with other Cronobacter species.</title>
        <authorList>
            <person name="Kucerova E."/>
            <person name="Clifton S.W."/>
            <person name="Xia X.Q."/>
            <person name="Long F."/>
            <person name="Porwollik S."/>
            <person name="Fulton L."/>
            <person name="Fronick C."/>
            <person name="Minx P."/>
            <person name="Kyung K."/>
            <person name="Warren W."/>
            <person name="Fulton R."/>
            <person name="Feng D."/>
            <person name="Wollam A."/>
            <person name="Shah N."/>
            <person name="Bhonagiri V."/>
            <person name="Nash W.E."/>
            <person name="Hallsworth-Pepin K."/>
            <person name="Wilson R.K."/>
            <person name="McClelland M."/>
            <person name="Forsythe S.J."/>
        </authorList>
    </citation>
    <scope>NUCLEOTIDE SEQUENCE [LARGE SCALE GENOMIC DNA]</scope>
    <source>
        <strain>ATCC BAA-894</strain>
    </source>
</reference>
<sequence>MASQLVLRKADFFATPTQPVVVADRYPQNVFAEHTHEFCELVLVWRGNGLHVLNDRPYRITCGDLFYIRAEDRHSYQSVNDLVLHNIIYCPERLQLNVNWRDLLENPRGVNGDPRWRLSSQGMVQARQVIDQLEHESPKQDALSHCLAESLFLQLAITLRRHRYQPSGGTGPGEGETLDLLMAALGNSLDVPFDLQHFCSHYQIAERPLRQLFRQQTGMTISQYLRQLRICQAQYLLRHSSLLISEIAARCGFEDSNYFSVVFTRETGVTPRVWRQQWGALAG</sequence>
<accession>A7ML57</accession>
<dbReference type="EMBL" id="CP000783">
    <property type="protein sequence ID" value="ABU79031.1"/>
    <property type="molecule type" value="Genomic_DNA"/>
</dbReference>
<dbReference type="RefSeq" id="WP_012126093.1">
    <property type="nucleotide sequence ID" value="NC_009778.1"/>
</dbReference>
<dbReference type="SMR" id="A7ML57"/>
<dbReference type="KEGG" id="esa:ESA_03845"/>
<dbReference type="PATRIC" id="fig|290339.8.peg.3417"/>
<dbReference type="HOGENOM" id="CLU_000445_88_5_6"/>
<dbReference type="Proteomes" id="UP000000260">
    <property type="component" value="Chromosome"/>
</dbReference>
<dbReference type="GO" id="GO:0005737">
    <property type="term" value="C:cytoplasm"/>
    <property type="evidence" value="ECO:0007669"/>
    <property type="project" value="UniProtKB-SubCell"/>
</dbReference>
<dbReference type="GO" id="GO:0003700">
    <property type="term" value="F:DNA-binding transcription factor activity"/>
    <property type="evidence" value="ECO:0007669"/>
    <property type="project" value="UniProtKB-UniRule"/>
</dbReference>
<dbReference type="GO" id="GO:0043565">
    <property type="term" value="F:sequence-specific DNA binding"/>
    <property type="evidence" value="ECO:0007669"/>
    <property type="project" value="InterPro"/>
</dbReference>
<dbReference type="GO" id="GO:0045893">
    <property type="term" value="P:positive regulation of DNA-templated transcription"/>
    <property type="evidence" value="ECO:0007669"/>
    <property type="project" value="UniProtKB-UniRule"/>
</dbReference>
<dbReference type="GO" id="GO:0019299">
    <property type="term" value="P:rhamnose metabolic process"/>
    <property type="evidence" value="ECO:0007669"/>
    <property type="project" value="UniProtKB-UniRule"/>
</dbReference>
<dbReference type="CDD" id="cd06977">
    <property type="entry name" value="cupin_RhaR_RhaS-like_N"/>
    <property type="match status" value="1"/>
</dbReference>
<dbReference type="Gene3D" id="1.10.10.60">
    <property type="entry name" value="Homeodomain-like"/>
    <property type="match status" value="1"/>
</dbReference>
<dbReference type="Gene3D" id="2.60.120.10">
    <property type="entry name" value="Jelly Rolls"/>
    <property type="match status" value="1"/>
</dbReference>
<dbReference type="HAMAP" id="MF_01533">
    <property type="entry name" value="HTH_type_RhaR"/>
    <property type="match status" value="1"/>
</dbReference>
<dbReference type="InterPro" id="IPR003313">
    <property type="entry name" value="AraC-bd"/>
</dbReference>
<dbReference type="InterPro" id="IPR009057">
    <property type="entry name" value="Homeodomain-like_sf"/>
</dbReference>
<dbReference type="InterPro" id="IPR037923">
    <property type="entry name" value="HTH-like"/>
</dbReference>
<dbReference type="InterPro" id="IPR018060">
    <property type="entry name" value="HTH_AraC"/>
</dbReference>
<dbReference type="InterPro" id="IPR018062">
    <property type="entry name" value="HTH_AraC-typ_CS"/>
</dbReference>
<dbReference type="InterPro" id="IPR047220">
    <property type="entry name" value="RhaR_RhaS-like_N"/>
</dbReference>
<dbReference type="InterPro" id="IPR014710">
    <property type="entry name" value="RmlC-like_jellyroll"/>
</dbReference>
<dbReference type="InterPro" id="IPR023699">
    <property type="entry name" value="Tscrpt_act_RhaR"/>
</dbReference>
<dbReference type="InterPro" id="IPR020449">
    <property type="entry name" value="Tscrpt_reg_AraC-type_HTH"/>
</dbReference>
<dbReference type="NCBIfam" id="NF010026">
    <property type="entry name" value="PRK13501.1"/>
    <property type="match status" value="1"/>
</dbReference>
<dbReference type="NCBIfam" id="NF010027">
    <property type="entry name" value="PRK13502.1"/>
    <property type="match status" value="1"/>
</dbReference>
<dbReference type="PANTHER" id="PTHR43280">
    <property type="entry name" value="ARAC-FAMILY TRANSCRIPTIONAL REGULATOR"/>
    <property type="match status" value="1"/>
</dbReference>
<dbReference type="PANTHER" id="PTHR43280:SF13">
    <property type="entry name" value="HTH-TYPE TRANSCRIPTIONAL ACTIVATOR RHAR"/>
    <property type="match status" value="1"/>
</dbReference>
<dbReference type="Pfam" id="PF02311">
    <property type="entry name" value="AraC_binding"/>
    <property type="match status" value="1"/>
</dbReference>
<dbReference type="Pfam" id="PF12833">
    <property type="entry name" value="HTH_18"/>
    <property type="match status" value="1"/>
</dbReference>
<dbReference type="PRINTS" id="PR00032">
    <property type="entry name" value="HTHARAC"/>
</dbReference>
<dbReference type="SMART" id="SM00342">
    <property type="entry name" value="HTH_ARAC"/>
    <property type="match status" value="1"/>
</dbReference>
<dbReference type="SUPFAM" id="SSF46689">
    <property type="entry name" value="Homeodomain-like"/>
    <property type="match status" value="1"/>
</dbReference>
<dbReference type="SUPFAM" id="SSF51215">
    <property type="entry name" value="Regulatory protein AraC"/>
    <property type="match status" value="1"/>
</dbReference>
<dbReference type="PROSITE" id="PS00041">
    <property type="entry name" value="HTH_ARAC_FAMILY_1"/>
    <property type="match status" value="1"/>
</dbReference>
<dbReference type="PROSITE" id="PS01124">
    <property type="entry name" value="HTH_ARAC_FAMILY_2"/>
    <property type="match status" value="1"/>
</dbReference>
<feature type="chain" id="PRO_0000316894" description="HTH-type transcriptional activator RhaR">
    <location>
        <begin position="1"/>
        <end position="283"/>
    </location>
</feature>
<feature type="domain" description="HTH araC/xylS-type" evidence="1">
    <location>
        <begin position="179"/>
        <end position="277"/>
    </location>
</feature>
<feature type="DNA-binding region" description="H-T-H motif" evidence="1">
    <location>
        <begin position="196"/>
        <end position="217"/>
    </location>
</feature>
<feature type="DNA-binding region" description="H-T-H motif" evidence="1">
    <location>
        <begin position="244"/>
        <end position="267"/>
    </location>
</feature>
<feature type="site" description="Interaction with sigma-70" evidence="1">
    <location>
        <position position="246"/>
    </location>
</feature>
<name>RHAR_CROS8</name>
<evidence type="ECO:0000255" key="1">
    <source>
        <dbReference type="HAMAP-Rule" id="MF_01533"/>
    </source>
</evidence>
<protein>
    <recommendedName>
        <fullName evidence="1">HTH-type transcriptional activator RhaR</fullName>
    </recommendedName>
    <alternativeName>
        <fullName evidence="1">L-rhamnose operon transcriptional activator RhaR</fullName>
    </alternativeName>
</protein>
<proteinExistence type="inferred from homology"/>
<comment type="function">
    <text evidence="1">Activates expression of the rhaSR operon in response to L-rhamnose.</text>
</comment>
<comment type="subunit">
    <text evidence="1">Binds DNA as a dimer.</text>
</comment>
<comment type="subcellular location">
    <subcellularLocation>
        <location evidence="1">Cytoplasm</location>
    </subcellularLocation>
</comment>
<gene>
    <name evidence="1" type="primary">rhaR</name>
    <name type="ordered locus">ESA_03845</name>
</gene>